<evidence type="ECO:0000255" key="1">
    <source>
        <dbReference type="HAMAP-Rule" id="MF_00600"/>
    </source>
</evidence>
<dbReference type="EC" id="5.6.1.7" evidence="1"/>
<dbReference type="EMBL" id="CP000112">
    <property type="protein sequence ID" value="ABB39270.1"/>
    <property type="molecule type" value="Genomic_DNA"/>
</dbReference>
<dbReference type="RefSeq" id="WP_011368336.1">
    <property type="nucleotide sequence ID" value="NC_007519.1"/>
</dbReference>
<dbReference type="SMR" id="Q30YH6"/>
<dbReference type="STRING" id="207559.Dde_2473"/>
<dbReference type="KEGG" id="dde:Dde_2473"/>
<dbReference type="eggNOG" id="COG0459">
    <property type="taxonomic scope" value="Bacteria"/>
</dbReference>
<dbReference type="HOGENOM" id="CLU_016503_3_0_7"/>
<dbReference type="Proteomes" id="UP000002710">
    <property type="component" value="Chromosome"/>
</dbReference>
<dbReference type="GO" id="GO:0005737">
    <property type="term" value="C:cytoplasm"/>
    <property type="evidence" value="ECO:0007669"/>
    <property type="project" value="UniProtKB-SubCell"/>
</dbReference>
<dbReference type="GO" id="GO:0005524">
    <property type="term" value="F:ATP binding"/>
    <property type="evidence" value="ECO:0007669"/>
    <property type="project" value="UniProtKB-UniRule"/>
</dbReference>
<dbReference type="GO" id="GO:0140662">
    <property type="term" value="F:ATP-dependent protein folding chaperone"/>
    <property type="evidence" value="ECO:0007669"/>
    <property type="project" value="InterPro"/>
</dbReference>
<dbReference type="GO" id="GO:0016853">
    <property type="term" value="F:isomerase activity"/>
    <property type="evidence" value="ECO:0007669"/>
    <property type="project" value="UniProtKB-KW"/>
</dbReference>
<dbReference type="GO" id="GO:0051082">
    <property type="term" value="F:unfolded protein binding"/>
    <property type="evidence" value="ECO:0007669"/>
    <property type="project" value="UniProtKB-UniRule"/>
</dbReference>
<dbReference type="GO" id="GO:0042026">
    <property type="term" value="P:protein refolding"/>
    <property type="evidence" value="ECO:0007669"/>
    <property type="project" value="UniProtKB-UniRule"/>
</dbReference>
<dbReference type="CDD" id="cd03344">
    <property type="entry name" value="GroEL"/>
    <property type="match status" value="1"/>
</dbReference>
<dbReference type="FunFam" id="3.50.7.10:FF:000001">
    <property type="entry name" value="60 kDa chaperonin"/>
    <property type="match status" value="1"/>
</dbReference>
<dbReference type="Gene3D" id="3.50.7.10">
    <property type="entry name" value="GroEL"/>
    <property type="match status" value="1"/>
</dbReference>
<dbReference type="Gene3D" id="1.10.560.10">
    <property type="entry name" value="GroEL-like equatorial domain"/>
    <property type="match status" value="1"/>
</dbReference>
<dbReference type="Gene3D" id="3.30.260.10">
    <property type="entry name" value="TCP-1-like chaperonin intermediate domain"/>
    <property type="match status" value="1"/>
</dbReference>
<dbReference type="HAMAP" id="MF_00600">
    <property type="entry name" value="CH60"/>
    <property type="match status" value="1"/>
</dbReference>
<dbReference type="InterPro" id="IPR018370">
    <property type="entry name" value="Chaperonin_Cpn60_CS"/>
</dbReference>
<dbReference type="InterPro" id="IPR001844">
    <property type="entry name" value="Cpn60/GroEL"/>
</dbReference>
<dbReference type="InterPro" id="IPR002423">
    <property type="entry name" value="Cpn60/GroEL/TCP-1"/>
</dbReference>
<dbReference type="InterPro" id="IPR027409">
    <property type="entry name" value="GroEL-like_apical_dom_sf"/>
</dbReference>
<dbReference type="InterPro" id="IPR027413">
    <property type="entry name" value="GROEL-like_equatorial_sf"/>
</dbReference>
<dbReference type="InterPro" id="IPR027410">
    <property type="entry name" value="TCP-1-like_intermed_sf"/>
</dbReference>
<dbReference type="NCBIfam" id="TIGR02348">
    <property type="entry name" value="GroEL"/>
    <property type="match status" value="1"/>
</dbReference>
<dbReference type="NCBIfam" id="NF000592">
    <property type="entry name" value="PRK00013.1"/>
    <property type="match status" value="1"/>
</dbReference>
<dbReference type="NCBIfam" id="NF009487">
    <property type="entry name" value="PRK12849.1"/>
    <property type="match status" value="1"/>
</dbReference>
<dbReference type="NCBIfam" id="NF009488">
    <property type="entry name" value="PRK12850.1"/>
    <property type="match status" value="1"/>
</dbReference>
<dbReference type="NCBIfam" id="NF009489">
    <property type="entry name" value="PRK12851.1"/>
    <property type="match status" value="1"/>
</dbReference>
<dbReference type="PANTHER" id="PTHR45633">
    <property type="entry name" value="60 KDA HEAT SHOCK PROTEIN, MITOCHONDRIAL"/>
    <property type="match status" value="1"/>
</dbReference>
<dbReference type="Pfam" id="PF00118">
    <property type="entry name" value="Cpn60_TCP1"/>
    <property type="match status" value="1"/>
</dbReference>
<dbReference type="PRINTS" id="PR00298">
    <property type="entry name" value="CHAPERONIN60"/>
</dbReference>
<dbReference type="SUPFAM" id="SSF52029">
    <property type="entry name" value="GroEL apical domain-like"/>
    <property type="match status" value="1"/>
</dbReference>
<dbReference type="SUPFAM" id="SSF48592">
    <property type="entry name" value="GroEL equatorial domain-like"/>
    <property type="match status" value="1"/>
</dbReference>
<dbReference type="SUPFAM" id="SSF54849">
    <property type="entry name" value="GroEL-intermediate domain like"/>
    <property type="match status" value="1"/>
</dbReference>
<dbReference type="PROSITE" id="PS00296">
    <property type="entry name" value="CHAPERONINS_CPN60"/>
    <property type="match status" value="1"/>
</dbReference>
<sequence>MASKEIVFDTKARERLARGVDKLANAVKVTLGPKGRNVVIEKSFGAPVITKDGVSVAKEIELEDKFENMGAQMVKEVASKTSDIAGDGTTTATILAQAIYKEGVKLVAAGRNPMAIKRGVDKAVEALVKELGNLAKPTRDQKEIAQVGTISANSDTTIGNIIAEAMSKVGKEGVITVEEAKGLETTLEVVEGMQFDRGYLSPYFVTDPEKMVCEMDEPLILINEKKISSMKDMLPVLEQVAKMNRPLVIIAEDVDGEALATLVVNKLRGTLQVVAVKAPGFGERRKAMLEDIATLTGGRVISEEMGIKLENATVADLGNAKRIVVDKENTTIVDGAGESEAIKARVKMIRAQIEETSSDYDREKLQERLAKIVGGVAVINVGAATETEMKEKKDRVEDALNATRAAVEEGIVPGGGTALVRCCKVLDDVKPADDDEAAGVTIIRRAIEEPLRQIAANAGFEGSIICEKVKEGKDAFGFNAATGEFEDLIAAGVIDPKKVSRIALQNAASVASLLLTTECAIAEKPKEDAPAAPAMGGMGGMGGMGGMY</sequence>
<name>CH60_OLEA2</name>
<accession>Q30YH6</accession>
<organism>
    <name type="scientific">Oleidesulfovibrio alaskensis (strain ATCC BAA-1058 / DSM 17464 / G20)</name>
    <name type="common">Desulfovibrio alaskensis</name>
    <dbReference type="NCBI Taxonomy" id="207559"/>
    <lineage>
        <taxon>Bacteria</taxon>
        <taxon>Pseudomonadati</taxon>
        <taxon>Thermodesulfobacteriota</taxon>
        <taxon>Desulfovibrionia</taxon>
        <taxon>Desulfovibrionales</taxon>
        <taxon>Desulfovibrionaceae</taxon>
        <taxon>Oleidesulfovibrio</taxon>
    </lineage>
</organism>
<gene>
    <name evidence="1" type="primary">groEL</name>
    <name evidence="1" type="synonym">groL</name>
    <name type="ordered locus">Dde_2473</name>
</gene>
<reference key="1">
    <citation type="journal article" date="2011" name="J. Bacteriol.">
        <title>Complete genome sequence and updated annotation of Desulfovibrio alaskensis G20.</title>
        <authorList>
            <person name="Hauser L.J."/>
            <person name="Land M.L."/>
            <person name="Brown S.D."/>
            <person name="Larimer F."/>
            <person name="Keller K.L."/>
            <person name="Rapp-Giles B.J."/>
            <person name="Price M.N."/>
            <person name="Lin M."/>
            <person name="Bruce D.C."/>
            <person name="Detter J.C."/>
            <person name="Tapia R."/>
            <person name="Han C.S."/>
            <person name="Goodwin L.A."/>
            <person name="Cheng J.F."/>
            <person name="Pitluck S."/>
            <person name="Copeland A."/>
            <person name="Lucas S."/>
            <person name="Nolan M."/>
            <person name="Lapidus A.L."/>
            <person name="Palumbo A.V."/>
            <person name="Wall J.D."/>
        </authorList>
    </citation>
    <scope>NUCLEOTIDE SEQUENCE [LARGE SCALE GENOMIC DNA]</scope>
    <source>
        <strain>ATCC BAA-1058 / DSM 17464 / G20</strain>
    </source>
</reference>
<proteinExistence type="inferred from homology"/>
<protein>
    <recommendedName>
        <fullName evidence="1">Chaperonin GroEL</fullName>
        <ecNumber evidence="1">5.6.1.7</ecNumber>
    </recommendedName>
    <alternativeName>
        <fullName evidence="1">60 kDa chaperonin</fullName>
    </alternativeName>
    <alternativeName>
        <fullName evidence="1">Chaperonin-60</fullName>
        <shortName evidence="1">Cpn60</shortName>
    </alternativeName>
</protein>
<feature type="chain" id="PRO_0000256906" description="Chaperonin GroEL">
    <location>
        <begin position="1"/>
        <end position="548"/>
    </location>
</feature>
<feature type="binding site" evidence="1">
    <location>
        <begin position="30"/>
        <end position="33"/>
    </location>
    <ligand>
        <name>ATP</name>
        <dbReference type="ChEBI" id="CHEBI:30616"/>
    </ligand>
</feature>
<feature type="binding site" evidence="1">
    <location>
        <position position="51"/>
    </location>
    <ligand>
        <name>ATP</name>
        <dbReference type="ChEBI" id="CHEBI:30616"/>
    </ligand>
</feature>
<feature type="binding site" evidence="1">
    <location>
        <begin position="87"/>
        <end position="91"/>
    </location>
    <ligand>
        <name>ATP</name>
        <dbReference type="ChEBI" id="CHEBI:30616"/>
    </ligand>
</feature>
<feature type="binding site" evidence="1">
    <location>
        <position position="415"/>
    </location>
    <ligand>
        <name>ATP</name>
        <dbReference type="ChEBI" id="CHEBI:30616"/>
    </ligand>
</feature>
<feature type="binding site" evidence="1">
    <location>
        <begin position="479"/>
        <end position="481"/>
    </location>
    <ligand>
        <name>ATP</name>
        <dbReference type="ChEBI" id="CHEBI:30616"/>
    </ligand>
</feature>
<feature type="binding site" evidence="1">
    <location>
        <position position="495"/>
    </location>
    <ligand>
        <name>ATP</name>
        <dbReference type="ChEBI" id="CHEBI:30616"/>
    </ligand>
</feature>
<comment type="function">
    <text evidence="1">Together with its co-chaperonin GroES, plays an essential role in assisting protein folding. The GroEL-GroES system forms a nano-cage that allows encapsulation of the non-native substrate proteins and provides a physical environment optimized to promote and accelerate protein folding.</text>
</comment>
<comment type="catalytic activity">
    <reaction evidence="1">
        <text>ATP + H2O + a folded polypeptide = ADP + phosphate + an unfolded polypeptide.</text>
        <dbReference type="EC" id="5.6.1.7"/>
    </reaction>
</comment>
<comment type="subunit">
    <text evidence="1">Forms a cylinder of 14 subunits composed of two heptameric rings stacked back-to-back. Interacts with the co-chaperonin GroES.</text>
</comment>
<comment type="subcellular location">
    <subcellularLocation>
        <location evidence="1">Cytoplasm</location>
    </subcellularLocation>
</comment>
<comment type="similarity">
    <text evidence="1">Belongs to the chaperonin (HSP60) family.</text>
</comment>
<keyword id="KW-0067">ATP-binding</keyword>
<keyword id="KW-0143">Chaperone</keyword>
<keyword id="KW-0963">Cytoplasm</keyword>
<keyword id="KW-0413">Isomerase</keyword>
<keyword id="KW-0547">Nucleotide-binding</keyword>
<keyword id="KW-1185">Reference proteome</keyword>